<gene>
    <name type="primary">WNT-7(II)</name>
</gene>
<evidence type="ECO:0000250" key="1">
    <source>
        <dbReference type="UniProtKB" id="P27467"/>
    </source>
</evidence>
<evidence type="ECO:0000250" key="2">
    <source>
        <dbReference type="UniProtKB" id="P28026"/>
    </source>
</evidence>
<evidence type="ECO:0000250" key="3">
    <source>
        <dbReference type="UniProtKB" id="P56704"/>
    </source>
</evidence>
<evidence type="ECO:0000255" key="4"/>
<evidence type="ECO:0000305" key="5"/>
<name>WNT72_EPTST</name>
<dbReference type="EMBL" id="M91270">
    <property type="protein sequence ID" value="AAA49251.1"/>
    <property type="molecule type" value="Genomic_DNA"/>
</dbReference>
<dbReference type="SMR" id="P28123"/>
<dbReference type="GlyCosmos" id="P28123">
    <property type="glycosylation" value="1 site, No reported glycans"/>
</dbReference>
<dbReference type="GO" id="GO:0005615">
    <property type="term" value="C:extracellular space"/>
    <property type="evidence" value="ECO:0007669"/>
    <property type="project" value="TreeGrafter"/>
</dbReference>
<dbReference type="GO" id="GO:0005125">
    <property type="term" value="F:cytokine activity"/>
    <property type="evidence" value="ECO:0007669"/>
    <property type="project" value="TreeGrafter"/>
</dbReference>
<dbReference type="GO" id="GO:0005109">
    <property type="term" value="F:frizzled binding"/>
    <property type="evidence" value="ECO:0007669"/>
    <property type="project" value="TreeGrafter"/>
</dbReference>
<dbReference type="GO" id="GO:0060070">
    <property type="term" value="P:canonical Wnt signaling pathway"/>
    <property type="evidence" value="ECO:0007669"/>
    <property type="project" value="TreeGrafter"/>
</dbReference>
<dbReference type="GO" id="GO:0045165">
    <property type="term" value="P:cell fate commitment"/>
    <property type="evidence" value="ECO:0007669"/>
    <property type="project" value="TreeGrafter"/>
</dbReference>
<dbReference type="GO" id="GO:0030182">
    <property type="term" value="P:neuron differentiation"/>
    <property type="evidence" value="ECO:0007669"/>
    <property type="project" value="TreeGrafter"/>
</dbReference>
<dbReference type="GO" id="GO:0046330">
    <property type="term" value="P:positive regulation of JNK cascade"/>
    <property type="evidence" value="ECO:0007669"/>
    <property type="project" value="TreeGrafter"/>
</dbReference>
<dbReference type="Gene3D" id="3.30.2460.20">
    <property type="match status" value="1"/>
</dbReference>
<dbReference type="InterPro" id="IPR005817">
    <property type="entry name" value="Wnt"/>
</dbReference>
<dbReference type="InterPro" id="IPR043158">
    <property type="entry name" value="Wnt_C"/>
</dbReference>
<dbReference type="PANTHER" id="PTHR12027:SF112">
    <property type="entry name" value="PROTEIN WNT-2"/>
    <property type="match status" value="1"/>
</dbReference>
<dbReference type="PANTHER" id="PTHR12027">
    <property type="entry name" value="WNT RELATED"/>
    <property type="match status" value="1"/>
</dbReference>
<dbReference type="Pfam" id="PF00110">
    <property type="entry name" value="wnt"/>
    <property type="match status" value="1"/>
</dbReference>
<dbReference type="SMART" id="SM00097">
    <property type="entry name" value="WNT1"/>
    <property type="match status" value="1"/>
</dbReference>
<organism>
    <name type="scientific">Eptatretus stoutii</name>
    <name type="common">Pacific hagfish</name>
    <dbReference type="NCBI Taxonomy" id="7765"/>
    <lineage>
        <taxon>Eukaryota</taxon>
        <taxon>Metazoa</taxon>
        <taxon>Chordata</taxon>
        <taxon>Craniata</taxon>
        <taxon>Vertebrata</taxon>
        <taxon>Cyclostomata</taxon>
        <taxon>Myxini</taxon>
        <taxon>Myxiniformes</taxon>
        <taxon>Myxinidae</taxon>
        <taxon>Eptatretinae</taxon>
        <taxon>Eptatretus</taxon>
    </lineage>
</organism>
<sequence>SGSCATKTCWRTLPPFRDIGFALKRKYHSAALVEPVRARRHRRPTFLKLVHVPGGGGYRKPSPTELVFLEQSPNYCESDAAAGSVGTQGRPCNRSSPLAGGCELLCCGRGYNTHIATQAWRCHCKF</sequence>
<keyword id="KW-0217">Developmental protein</keyword>
<keyword id="KW-1015">Disulfide bond</keyword>
<keyword id="KW-0272">Extracellular matrix</keyword>
<keyword id="KW-0325">Glycoprotein</keyword>
<keyword id="KW-0449">Lipoprotein</keyword>
<keyword id="KW-0964">Secreted</keyword>
<keyword id="KW-0879">Wnt signaling pathway</keyword>
<accession>P28123</accession>
<comment type="function">
    <text>Ligand for members of the frizzled family of seven transmembrane receptors. Probable developmental protein. May be a signaling molecule which affects the development of discrete regions of tissues. Is likely to signal over only few cell diameters.</text>
</comment>
<comment type="subcellular location">
    <subcellularLocation>
        <location>Secreted</location>
        <location>Extracellular space</location>
        <location>Extracellular matrix</location>
    </subcellularLocation>
</comment>
<comment type="PTM">
    <text evidence="1 3">Palmitoleoylation is required for efficient binding to frizzled receptors. Depalmitoleoylation leads to Wnt signaling pathway inhibition.</text>
</comment>
<comment type="similarity">
    <text evidence="5">Belongs to the Wnt family.</text>
</comment>
<protein>
    <recommendedName>
        <fullName>Protein Wnt-7(II)</fullName>
    </recommendedName>
</protein>
<reference key="1">
    <citation type="journal article" date="1992" name="Proc. Natl. Acad. Sci. U.S.A.">
        <title>Diversification of the Wnt gene family on the ancestral lineage of vertebrates.</title>
        <authorList>
            <person name="Sidow A."/>
        </authorList>
    </citation>
    <scope>NUCLEOTIDE SEQUENCE [GENOMIC DNA]</scope>
</reference>
<proteinExistence type="inferred from homology"/>
<feature type="chain" id="PRO_0000200657" description="Protein Wnt-7(II)">
    <location>
        <begin position="1" status="less than"/>
        <end position="126" status="greater than"/>
    </location>
</feature>
<feature type="lipid moiety-binding region" description="O-palmitoleoyl serine; by PORCN" evidence="3">
    <location>
        <position position="1"/>
    </location>
</feature>
<feature type="glycosylation site" description="N-linked (GlcNAc...) asparagine" evidence="4">
    <location>
        <position position="93"/>
    </location>
</feature>
<feature type="disulfide bond" evidence="2">
    <location>
        <begin position="92"/>
        <end position="107"/>
    </location>
</feature>
<feature type="non-terminal residue">
    <location>
        <position position="1"/>
    </location>
</feature>
<feature type="non-terminal residue">
    <location>
        <position position="126"/>
    </location>
</feature>